<protein>
    <recommendedName>
        <fullName evidence="1">Heat shock protein HspQ</fullName>
    </recommendedName>
</protein>
<proteinExistence type="inferred from homology"/>
<reference key="1">
    <citation type="journal article" date="2005" name="Nucleic Acids Res.">
        <title>The genome sequence of Salmonella enterica serovar Choleraesuis, a highly invasive and resistant zoonotic pathogen.</title>
        <authorList>
            <person name="Chiu C.-H."/>
            <person name="Tang P."/>
            <person name="Chu C."/>
            <person name="Hu S."/>
            <person name="Bao Q."/>
            <person name="Yu J."/>
            <person name="Chou Y.-Y."/>
            <person name="Wang H.-S."/>
            <person name="Lee Y.-S."/>
        </authorList>
    </citation>
    <scope>NUCLEOTIDE SEQUENCE [LARGE SCALE GENOMIC DNA]</scope>
    <source>
        <strain>SC-B67</strain>
    </source>
</reference>
<keyword id="KW-0963">Cytoplasm</keyword>
<keyword id="KW-0346">Stress response</keyword>
<name>HSPQ_SALCH</name>
<feature type="chain" id="PRO_0000315309" description="Heat shock protein HspQ">
    <location>
        <begin position="1"/>
        <end position="105"/>
    </location>
</feature>
<gene>
    <name evidence="1" type="primary">hspQ</name>
    <name type="ordered locus">SCH_1031</name>
</gene>
<accession>Q57QS4</accession>
<evidence type="ECO:0000255" key="1">
    <source>
        <dbReference type="HAMAP-Rule" id="MF_01194"/>
    </source>
</evidence>
<dbReference type="EMBL" id="AE017220">
    <property type="protein sequence ID" value="AAX64937.1"/>
    <property type="molecule type" value="Genomic_DNA"/>
</dbReference>
<dbReference type="RefSeq" id="WP_001539653.1">
    <property type="nucleotide sequence ID" value="NC_006905.1"/>
</dbReference>
<dbReference type="SMR" id="Q57QS4"/>
<dbReference type="KEGG" id="sec:SCH_1031"/>
<dbReference type="HOGENOM" id="CLU_123865_1_0_6"/>
<dbReference type="Proteomes" id="UP000000538">
    <property type="component" value="Chromosome"/>
</dbReference>
<dbReference type="GO" id="GO:0005737">
    <property type="term" value="C:cytoplasm"/>
    <property type="evidence" value="ECO:0007669"/>
    <property type="project" value="UniProtKB-SubCell"/>
</dbReference>
<dbReference type="GO" id="GO:0003677">
    <property type="term" value="F:DNA binding"/>
    <property type="evidence" value="ECO:0007669"/>
    <property type="project" value="InterPro"/>
</dbReference>
<dbReference type="GO" id="GO:0009408">
    <property type="term" value="P:response to heat"/>
    <property type="evidence" value="ECO:0007669"/>
    <property type="project" value="UniProtKB-UniRule"/>
</dbReference>
<dbReference type="Gene3D" id="2.30.30.390">
    <property type="entry name" value="Hemimethylated DNA-binding domain"/>
    <property type="match status" value="1"/>
</dbReference>
<dbReference type="HAMAP" id="MF_01194">
    <property type="entry name" value="HspQ"/>
    <property type="match status" value="1"/>
</dbReference>
<dbReference type="InterPro" id="IPR011722">
    <property type="entry name" value="Hemimethylated_DNA-bd_dom"/>
</dbReference>
<dbReference type="InterPro" id="IPR036623">
    <property type="entry name" value="Hemimethylated_DNA-bd_sf"/>
</dbReference>
<dbReference type="InterPro" id="IPR022866">
    <property type="entry name" value="HspQ"/>
</dbReference>
<dbReference type="NCBIfam" id="NF010729">
    <property type="entry name" value="PRK14129.1"/>
    <property type="match status" value="1"/>
</dbReference>
<dbReference type="NCBIfam" id="TIGR02097">
    <property type="entry name" value="yccV"/>
    <property type="match status" value="1"/>
</dbReference>
<dbReference type="Pfam" id="PF08755">
    <property type="entry name" value="YccV-like"/>
    <property type="match status" value="1"/>
</dbReference>
<dbReference type="SMART" id="SM00992">
    <property type="entry name" value="YccV-like"/>
    <property type="match status" value="1"/>
</dbReference>
<dbReference type="SUPFAM" id="SSF141255">
    <property type="entry name" value="YccV-like"/>
    <property type="match status" value="1"/>
</dbReference>
<comment type="function">
    <text evidence="1">Involved in the degradation of certain denaturated proteins, including DnaA, during heat shock stress.</text>
</comment>
<comment type="subcellular location">
    <subcellularLocation>
        <location evidence="1">Cytoplasm</location>
    </subcellularLocation>
</comment>
<comment type="similarity">
    <text evidence="1">Belongs to the HspQ family.</text>
</comment>
<sequence>MIASKFGIGQQVRHSLLGYLGVVVDIDPEYSLDEPSPDELAVNDELRAAPWYHVVMEDDDGQPVRTYLAEAQLRSEMRDEHPEQPSMDELARTIRKQLQAPRLRN</sequence>
<organism>
    <name type="scientific">Salmonella choleraesuis (strain SC-B67)</name>
    <dbReference type="NCBI Taxonomy" id="321314"/>
    <lineage>
        <taxon>Bacteria</taxon>
        <taxon>Pseudomonadati</taxon>
        <taxon>Pseudomonadota</taxon>
        <taxon>Gammaproteobacteria</taxon>
        <taxon>Enterobacterales</taxon>
        <taxon>Enterobacteriaceae</taxon>
        <taxon>Salmonella</taxon>
    </lineage>
</organism>